<comment type="function">
    <text evidence="1">Involved in phosphonate degradation.</text>
</comment>
<comment type="catalytic activity">
    <reaction>
        <text>(2-aminoethyl)phosphonate + pyruvate = phosphonoacetaldehyde + L-alanine</text>
        <dbReference type="Rhea" id="RHEA:17021"/>
        <dbReference type="ChEBI" id="CHEBI:15361"/>
        <dbReference type="ChEBI" id="CHEBI:57418"/>
        <dbReference type="ChEBI" id="CHEBI:57972"/>
        <dbReference type="ChEBI" id="CHEBI:58383"/>
        <dbReference type="EC" id="2.6.1.37"/>
    </reaction>
</comment>
<comment type="cofactor">
    <cofactor evidence="1">
        <name>pyridoxal 5'-phosphate</name>
        <dbReference type="ChEBI" id="CHEBI:597326"/>
    </cofactor>
</comment>
<comment type="subunit">
    <text evidence="1">Homodimer.</text>
</comment>
<comment type="similarity">
    <text evidence="3">Belongs to the class-V pyridoxal-phosphate-dependent aminotransferase family. PhnW subfamily.</text>
</comment>
<proteinExistence type="inferred from homology"/>
<name>PHNW_LYSSC</name>
<keyword id="KW-0032">Aminotransferase</keyword>
<keyword id="KW-0663">Pyridoxal phosphate</keyword>
<keyword id="KW-0670">Pyruvate</keyword>
<keyword id="KW-0808">Transferase</keyword>
<sequence>MSNYKLLTPGPLTTTKTVKQEMLKDRCTWDDDYKNVTQVIRKQLLNLAQVDEPHYTAVLMQGSGSFVVESVLTTAVGEDDKLLIITNGAYGERIVEMAKVLRLALVVYSVPYDKQPSSLEVQALLEKDASITHVAVVHCETTTGILNPIKEIGEVVYSFNKTFIVDAMSSFGGVPMDLSDLHIDFCISSANKCIQGVPGFGFVIAKTNILEKCKGQARSVALDLYSQWEVMKKDGKWRFTSPTHVVAAFAKALEELVEEGGVNARYQRYADNNLLLRSRLSVLGFEAYISEELQSPIITTYLFPHKEFSFEHFYQEMKKAGFVIYPGKLTDVDTFRIGNIGDIYEEDMQALCEVIENYMVVKNNEN</sequence>
<organism>
    <name type="scientific">Lysinibacillus sphaericus (strain C3-41)</name>
    <dbReference type="NCBI Taxonomy" id="444177"/>
    <lineage>
        <taxon>Bacteria</taxon>
        <taxon>Bacillati</taxon>
        <taxon>Bacillota</taxon>
        <taxon>Bacilli</taxon>
        <taxon>Bacillales</taxon>
        <taxon>Bacillaceae</taxon>
        <taxon>Lysinibacillus</taxon>
    </lineage>
</organism>
<gene>
    <name type="primary">phnW</name>
    <name type="ordered locus">Bsph_1360</name>
</gene>
<dbReference type="EC" id="2.6.1.37"/>
<dbReference type="EMBL" id="CP000817">
    <property type="protein sequence ID" value="ACA38968.1"/>
    <property type="molecule type" value="Genomic_DNA"/>
</dbReference>
<dbReference type="RefSeq" id="WP_012293090.1">
    <property type="nucleotide sequence ID" value="NC_010382.1"/>
</dbReference>
<dbReference type="SMR" id="B1HPR6"/>
<dbReference type="EnsemblBacteria" id="ACA38968">
    <property type="protein sequence ID" value="ACA38968"/>
    <property type="gene ID" value="Bsph_1360"/>
</dbReference>
<dbReference type="KEGG" id="lsp:Bsph_1360"/>
<dbReference type="HOGENOM" id="CLU_027686_3_1_9"/>
<dbReference type="Proteomes" id="UP000002164">
    <property type="component" value="Chromosome"/>
</dbReference>
<dbReference type="GO" id="GO:0047304">
    <property type="term" value="F:2-aminoethylphosphonate-pyruvate transaminase activity"/>
    <property type="evidence" value="ECO:0007669"/>
    <property type="project" value="UniProtKB-UniRule"/>
</dbReference>
<dbReference type="GO" id="GO:0019700">
    <property type="term" value="P:organic phosphonate catabolic process"/>
    <property type="evidence" value="ECO:0007669"/>
    <property type="project" value="InterPro"/>
</dbReference>
<dbReference type="Gene3D" id="3.90.1150.10">
    <property type="entry name" value="Aspartate Aminotransferase, domain 1"/>
    <property type="match status" value="1"/>
</dbReference>
<dbReference type="Gene3D" id="3.40.640.10">
    <property type="entry name" value="Type I PLP-dependent aspartate aminotransferase-like (Major domain)"/>
    <property type="match status" value="1"/>
</dbReference>
<dbReference type="HAMAP" id="MF_01376">
    <property type="entry name" value="PhnW_aminotrans_5"/>
    <property type="match status" value="1"/>
</dbReference>
<dbReference type="InterPro" id="IPR000192">
    <property type="entry name" value="Aminotrans_V_dom"/>
</dbReference>
<dbReference type="InterPro" id="IPR012703">
    <property type="entry name" value="NH2EtPonate_pyrv_transaminase"/>
</dbReference>
<dbReference type="InterPro" id="IPR015424">
    <property type="entry name" value="PyrdxlP-dep_Trfase"/>
</dbReference>
<dbReference type="InterPro" id="IPR015421">
    <property type="entry name" value="PyrdxlP-dep_Trfase_major"/>
</dbReference>
<dbReference type="InterPro" id="IPR015422">
    <property type="entry name" value="PyrdxlP-dep_Trfase_small"/>
</dbReference>
<dbReference type="InterPro" id="IPR024169">
    <property type="entry name" value="SP_NH2Trfase/AEP_transaminase"/>
</dbReference>
<dbReference type="NCBIfam" id="TIGR03301">
    <property type="entry name" value="PhnW-AepZ"/>
    <property type="match status" value="1"/>
</dbReference>
<dbReference type="NCBIfam" id="NF010006">
    <property type="entry name" value="PRK13479.1"/>
    <property type="match status" value="1"/>
</dbReference>
<dbReference type="NCBIfam" id="TIGR02326">
    <property type="entry name" value="transamin_PhnW"/>
    <property type="match status" value="1"/>
</dbReference>
<dbReference type="PANTHER" id="PTHR42778">
    <property type="entry name" value="2-AMINOETHYLPHOSPHONATE--PYRUVATE TRANSAMINASE"/>
    <property type="match status" value="1"/>
</dbReference>
<dbReference type="PANTHER" id="PTHR42778:SF1">
    <property type="entry name" value="2-AMINOETHYLPHOSPHONATE--PYRUVATE TRANSAMINASE"/>
    <property type="match status" value="1"/>
</dbReference>
<dbReference type="Pfam" id="PF00266">
    <property type="entry name" value="Aminotran_5"/>
    <property type="match status" value="1"/>
</dbReference>
<dbReference type="PIRSF" id="PIRSF000524">
    <property type="entry name" value="SPT"/>
    <property type="match status" value="1"/>
</dbReference>
<dbReference type="SUPFAM" id="SSF53383">
    <property type="entry name" value="PLP-dependent transferases"/>
    <property type="match status" value="1"/>
</dbReference>
<reference key="1">
    <citation type="journal article" date="2008" name="J. Bacteriol.">
        <title>Complete genome sequence of the mosquitocidal bacterium Bacillus sphaericus C3-41 and comparison with those of closely related Bacillus species.</title>
        <authorList>
            <person name="Hu X."/>
            <person name="Fan W."/>
            <person name="Han B."/>
            <person name="Liu H."/>
            <person name="Zheng D."/>
            <person name="Li Q."/>
            <person name="Dong W."/>
            <person name="Yan J."/>
            <person name="Gao M."/>
            <person name="Berry C."/>
            <person name="Yuan Z."/>
        </authorList>
    </citation>
    <scope>NUCLEOTIDE SEQUENCE [LARGE SCALE GENOMIC DNA]</scope>
    <source>
        <strain>C3-41</strain>
    </source>
</reference>
<protein>
    <recommendedName>
        <fullName>2-aminoethylphosphonate--pyruvate transaminase</fullName>
        <ecNumber>2.6.1.37</ecNumber>
    </recommendedName>
    <alternativeName>
        <fullName>2-aminoethylphosphonate aminotransferase</fullName>
    </alternativeName>
    <alternativeName>
        <fullName>AEP transaminase</fullName>
        <shortName>AEPT</shortName>
    </alternativeName>
</protein>
<accession>B1HPR6</accession>
<evidence type="ECO:0000250" key="1"/>
<evidence type="ECO:0000255" key="2"/>
<evidence type="ECO:0000305" key="3"/>
<feature type="chain" id="PRO_0000365656" description="2-aminoethylphosphonate--pyruvate transaminase">
    <location>
        <begin position="1"/>
        <end position="366"/>
    </location>
</feature>
<feature type="modified residue" description="N6-(pyridoxal phosphate)lysine" evidence="2">
    <location>
        <position position="192"/>
    </location>
</feature>